<name>CAPPA_SACI4</name>
<feature type="chain" id="PRO_1000216174" description="Phosphoenolpyruvate carboxylase">
    <location>
        <begin position="1"/>
        <end position="511"/>
    </location>
</feature>
<protein>
    <recommendedName>
        <fullName evidence="1">Phosphoenolpyruvate carboxylase</fullName>
        <shortName evidence="1">PEPC</shortName>
        <shortName evidence="1">PEPCase</shortName>
        <ecNumber evidence="1">4.1.1.31</ecNumber>
    </recommendedName>
</protein>
<organism>
    <name type="scientific">Saccharolobus islandicus (strain M.14.25 / Kamchatka #1)</name>
    <name type="common">Sulfolobus islandicus</name>
    <dbReference type="NCBI Taxonomy" id="427317"/>
    <lineage>
        <taxon>Archaea</taxon>
        <taxon>Thermoproteota</taxon>
        <taxon>Thermoprotei</taxon>
        <taxon>Sulfolobales</taxon>
        <taxon>Sulfolobaceae</taxon>
        <taxon>Saccharolobus</taxon>
    </lineage>
</organism>
<accession>C3MTS7</accession>
<reference key="1">
    <citation type="journal article" date="2009" name="Proc. Natl. Acad. Sci. U.S.A.">
        <title>Biogeography of the Sulfolobus islandicus pan-genome.</title>
        <authorList>
            <person name="Reno M.L."/>
            <person name="Held N.L."/>
            <person name="Fields C.J."/>
            <person name="Burke P.V."/>
            <person name="Whitaker R.J."/>
        </authorList>
    </citation>
    <scope>NUCLEOTIDE SEQUENCE [LARGE SCALE GENOMIC DNA]</scope>
    <source>
        <strain>M.14.25 / Kamchatka #1</strain>
    </source>
</reference>
<comment type="function">
    <text evidence="1">Catalyzes the irreversible beta-carboxylation of phosphoenolpyruvate (PEP) to form oxaloacetate (OAA), a four-carbon dicarboxylic acid source for the tricarboxylic acid cycle.</text>
</comment>
<comment type="catalytic activity">
    <reaction evidence="1">
        <text>oxaloacetate + phosphate = phosphoenolpyruvate + hydrogencarbonate</text>
        <dbReference type="Rhea" id="RHEA:28370"/>
        <dbReference type="ChEBI" id="CHEBI:16452"/>
        <dbReference type="ChEBI" id="CHEBI:17544"/>
        <dbReference type="ChEBI" id="CHEBI:43474"/>
        <dbReference type="ChEBI" id="CHEBI:58702"/>
        <dbReference type="EC" id="4.1.1.31"/>
    </reaction>
</comment>
<comment type="cofactor">
    <cofactor evidence="1">
        <name>Mg(2+)</name>
        <dbReference type="ChEBI" id="CHEBI:18420"/>
    </cofactor>
</comment>
<comment type="subunit">
    <text evidence="1">Homotetramer.</text>
</comment>
<comment type="similarity">
    <text evidence="1">Belongs to the PEPCase type 2 family.</text>
</comment>
<evidence type="ECO:0000255" key="1">
    <source>
        <dbReference type="HAMAP-Rule" id="MF_01904"/>
    </source>
</evidence>
<gene>
    <name evidence="1" type="primary">ppcA</name>
    <name type="ordered locus">M1425_0069</name>
</gene>
<dbReference type="EC" id="4.1.1.31" evidence="1"/>
<dbReference type="EMBL" id="CP001400">
    <property type="protein sequence ID" value="ACP36961.1"/>
    <property type="molecule type" value="Genomic_DNA"/>
</dbReference>
<dbReference type="RefSeq" id="WP_012710248.1">
    <property type="nucleotide sequence ID" value="NC_012588.1"/>
</dbReference>
<dbReference type="SMR" id="C3MTS7"/>
<dbReference type="GeneID" id="84060555"/>
<dbReference type="KEGG" id="sia:M1425_0069"/>
<dbReference type="HOGENOM" id="CLU_517433_0_0_2"/>
<dbReference type="Proteomes" id="UP000001350">
    <property type="component" value="Chromosome"/>
</dbReference>
<dbReference type="GO" id="GO:0000287">
    <property type="term" value="F:magnesium ion binding"/>
    <property type="evidence" value="ECO:0007669"/>
    <property type="project" value="UniProtKB-UniRule"/>
</dbReference>
<dbReference type="GO" id="GO:0008964">
    <property type="term" value="F:phosphoenolpyruvate carboxylase activity"/>
    <property type="evidence" value="ECO:0007669"/>
    <property type="project" value="UniProtKB-UniRule"/>
</dbReference>
<dbReference type="GO" id="GO:0015977">
    <property type="term" value="P:carbon fixation"/>
    <property type="evidence" value="ECO:0007669"/>
    <property type="project" value="UniProtKB-UniRule"/>
</dbReference>
<dbReference type="GO" id="GO:0006107">
    <property type="term" value="P:oxaloacetate metabolic process"/>
    <property type="evidence" value="ECO:0007669"/>
    <property type="project" value="UniProtKB-UniRule"/>
</dbReference>
<dbReference type="GO" id="GO:0006099">
    <property type="term" value="P:tricarboxylic acid cycle"/>
    <property type="evidence" value="ECO:0007669"/>
    <property type="project" value="InterPro"/>
</dbReference>
<dbReference type="HAMAP" id="MF_01904">
    <property type="entry name" value="PEPcase_type2"/>
    <property type="match status" value="1"/>
</dbReference>
<dbReference type="InterPro" id="IPR007566">
    <property type="entry name" value="PEP_COase_arc-type"/>
</dbReference>
<dbReference type="InterPro" id="IPR015813">
    <property type="entry name" value="Pyrv/PenolPyrv_kinase-like_dom"/>
</dbReference>
<dbReference type="NCBIfam" id="TIGR02751">
    <property type="entry name" value="PEPCase_arch"/>
    <property type="match status" value="1"/>
</dbReference>
<dbReference type="Pfam" id="PF14010">
    <property type="entry name" value="PEPcase_2"/>
    <property type="match status" value="1"/>
</dbReference>
<dbReference type="PIRSF" id="PIRSF006677">
    <property type="entry name" value="UCP006677"/>
    <property type="match status" value="1"/>
</dbReference>
<dbReference type="SUPFAM" id="SSF51621">
    <property type="entry name" value="Phosphoenolpyruvate/pyruvate domain"/>
    <property type="match status" value="1"/>
</dbReference>
<keyword id="KW-0120">Carbon dioxide fixation</keyword>
<keyword id="KW-0456">Lyase</keyword>
<keyword id="KW-0460">Magnesium</keyword>
<sequence>MRIIPRTMSTQHPDNAKVPEWAKSEVIEGEDEVKEAFLAYSMYGVHEVMWDAEGKDVDTHVVRKLLSNYPDYFREHILGKDVFLTYRLPNPKVEGADRKVFAETMESIPITYDLAEKFYGNGITVPVFEVILPMTTSNLEIISVARYYEKAVANEDELELYNGVKVKDLVGEIYPKVIEVIPLVEDRDSLQNIDNIVEGYYKVIKPKYMRVFLARSDPAMNYGMITAVLSVKIALSELYKLSESLNFEIYPIIGVGSLPFRGHLSPENYEKVLEEYKGVYTYTIQSAFKYDYDYDKVKSAISSINNSRIGPAKILEKYEEDVLRKITILYTERYQPIIESLANAINDVSVLLPRRRARKLHIGLFGYSRSAGKVSLPRAISFVGSLYSIGIPPELIGISSLSNLDEKEWDIFKQNYVNFKHDLQTAARFFNWESFELIKDIWKISEDTIAKIKEDIDYAESVIGIKLGDIDYDSRKHILMSSLFLLSFKEKILQESKKYLYEMALIRRSLG</sequence>
<proteinExistence type="inferred from homology"/>